<name>VE5B_HPV6C</name>
<sequence>MVMLTCHLNDGDTWLFLWLFTAFVVAVLGLLLLHYRAVHGTEKTKCAKCKSNRNTTVDYVYMSHGDNGDYVYMN</sequence>
<reference key="1">
    <citation type="journal article" date="1989" name="Virus Genes">
        <title>Structural analysis of human papillomavirus type 6c isolates from condyloma acuminatum and juvenile-onset and adult-onset laryngeal papillomata.</title>
        <authorList>
            <person name="Metcalfe L."/>
            <person name="Chen S.-L."/>
            <person name="Mounts P."/>
        </authorList>
    </citation>
    <scope>NUCLEOTIDE SEQUENCE [GENOMIC DNA]</scope>
    <source>
        <strain>Isolates HPV-6C/[GT,ART]</strain>
    </source>
</reference>
<reference key="2">
    <citation type="journal article" date="1989" name="J. Med. Virol.">
        <title>Detection by antibody probes of human papillomavirus type 6 E5 proteins in respiratory papillomata.</title>
        <authorList>
            <person name="Chen S.L."/>
            <person name="Mounts P."/>
        </authorList>
    </citation>
    <scope>NUCLEOTIDE SEQUENCE [GENOMIC DNA]</scope>
</reference>
<dbReference type="EMBL" id="M26656">
    <property type="protein sequence ID" value="AAA47013.1"/>
    <property type="molecule type" value="Genomic_DNA"/>
</dbReference>
<dbReference type="PIR" id="C61055">
    <property type="entry name" value="C61055"/>
</dbReference>
<dbReference type="SMR" id="P69900"/>
<dbReference type="InterPro" id="IPR035154">
    <property type="entry name" value="DUF5472"/>
</dbReference>
<dbReference type="Pfam" id="PF17566">
    <property type="entry name" value="DUF5472"/>
    <property type="match status" value="1"/>
</dbReference>
<protein>
    <recommendedName>
        <fullName>Probable protein E5B</fullName>
    </recommendedName>
</protein>
<feature type="chain" id="PRO_0000133313" description="Probable protein E5B">
    <location>
        <begin position="1"/>
        <end position="74"/>
    </location>
</feature>
<proteinExistence type="predicted"/>
<organismHost>
    <name type="scientific">Homo sapiens</name>
    <name type="common">Human</name>
    <dbReference type="NCBI Taxonomy" id="9606"/>
</organismHost>
<accession>P69900</accession>
<accession>P04018</accession>
<keyword id="KW-0244">Early protein</keyword>
<organism>
    <name type="scientific">Human papillomavirus type 6c</name>
    <dbReference type="NCBI Taxonomy" id="10601"/>
    <lineage>
        <taxon>Viruses</taxon>
        <taxon>Monodnaviria</taxon>
        <taxon>Shotokuvirae</taxon>
        <taxon>Cossaviricota</taxon>
        <taxon>Papovaviricetes</taxon>
        <taxon>Zurhausenvirales</taxon>
        <taxon>Papillomaviridae</taxon>
        <taxon>Firstpapillomavirinae</taxon>
        <taxon>Alphapapillomavirus</taxon>
        <taxon>Alphapapillomavirus 10</taxon>
    </lineage>
</organism>